<gene>
    <name type="ordered locus">17.5</name>
</gene>
<sequence length="67" mass="7392">MLSLDFNNELIKAAPIVGTGVADVSARLFFGLSLNEWFYVAAIAYTVVQIGAKVVDKMIDWKKANKE</sequence>
<organism>
    <name type="scientific">Escherichia phage T7</name>
    <name type="common">Bacteriophage T7</name>
    <dbReference type="NCBI Taxonomy" id="10760"/>
    <lineage>
        <taxon>Viruses</taxon>
        <taxon>Duplodnaviria</taxon>
        <taxon>Heunggongvirae</taxon>
        <taxon>Uroviricota</taxon>
        <taxon>Caudoviricetes</taxon>
        <taxon>Autographiviridae</taxon>
        <taxon>Studiervirinae</taxon>
        <taxon>Teseptimavirus</taxon>
        <taxon>Teseptimavirus T7</taxon>
    </lineage>
</organism>
<dbReference type="EMBL" id="V01146">
    <property type="protein sequence ID" value="CAA24436.1"/>
    <property type="molecule type" value="Genomic_DNA"/>
</dbReference>
<dbReference type="PIR" id="A04427">
    <property type="entry name" value="Q7BPE7"/>
</dbReference>
<dbReference type="RefSeq" id="NP_042006.1">
    <property type="nucleotide sequence ID" value="NC_001604.1"/>
</dbReference>
<dbReference type="SMR" id="P03802"/>
<dbReference type="TCDB" id="1.E.6.1.1">
    <property type="family name" value="the t7 holin (t7 holin) family"/>
</dbReference>
<dbReference type="KEGG" id="vg:1261022"/>
<dbReference type="OrthoDB" id="23288at10239"/>
<dbReference type="Proteomes" id="UP000000840">
    <property type="component" value="Genome"/>
</dbReference>
<dbReference type="GO" id="GO:0020002">
    <property type="term" value="C:host cell plasma membrane"/>
    <property type="evidence" value="ECO:0007669"/>
    <property type="project" value="UniProtKB-SubCell"/>
</dbReference>
<dbReference type="GO" id="GO:0016020">
    <property type="term" value="C:membrane"/>
    <property type="evidence" value="ECO:0007669"/>
    <property type="project" value="UniProtKB-UniRule"/>
</dbReference>
<dbReference type="GO" id="GO:0140911">
    <property type="term" value="F:pore-forming activity"/>
    <property type="evidence" value="ECO:0007669"/>
    <property type="project" value="UniProtKB-UniRule"/>
</dbReference>
<dbReference type="GO" id="GO:0044659">
    <property type="term" value="P:viral release from host cell by cytolysis"/>
    <property type="evidence" value="ECO:0007669"/>
    <property type="project" value="InterPro"/>
</dbReference>
<dbReference type="HAMAP" id="MF_04108">
    <property type="entry name" value="HOLIN_T7"/>
    <property type="match status" value="1"/>
</dbReference>
<dbReference type="InterPro" id="IPR019682">
    <property type="entry name" value="Phage_T7_Gp17.5_holin"/>
</dbReference>
<dbReference type="Pfam" id="PF10746">
    <property type="entry name" value="Phage_holin_2_2"/>
    <property type="match status" value="1"/>
</dbReference>
<reference key="1">
    <citation type="journal article" date="1983" name="J. Mol. Biol.">
        <title>Complete nucleotide sequence of bacteriophage T7 DNA and the locations of T7 genetic elements.</title>
        <authorList>
            <person name="Dunn J.J."/>
            <person name="Studier F.W."/>
        </authorList>
    </citation>
    <scope>NUCLEOTIDE SEQUENCE [LARGE SCALE GENOMIC DNA]</scope>
</reference>
<reference key="2">
    <citation type="journal article" date="2000" name="Annu. Rev. Microbiol.">
        <title>Holins: the protein clocks of bacteriophage infections.</title>
        <authorList>
            <person name="Wang I.N."/>
            <person name="Smith D.L."/>
            <person name="Young R."/>
        </authorList>
    </citation>
    <scope>REVIEW</scope>
</reference>
<reference key="3">
    <citation type="journal article" date="2014" name="J. Virol.">
        <title>Lysis delay and burst shrinkage of coliphage T7 by deletion of terminator Tphi reversed by deletion of early genes.</title>
        <authorList>
            <person name="Nguyen H.M."/>
            <person name="Kang C."/>
        </authorList>
    </citation>
    <scope>FUNCTION</scope>
</reference>
<keyword id="KW-0204">Cytolysis</keyword>
<keyword id="KW-1030">Host cell inner membrane</keyword>
<keyword id="KW-0578">Host cell lysis by virus</keyword>
<keyword id="KW-1032">Host cell membrane</keyword>
<keyword id="KW-1043">Host membrane</keyword>
<keyword id="KW-0472">Membrane</keyword>
<keyword id="KW-1185">Reference proteome</keyword>
<keyword id="KW-0735">Signal-anchor</keyword>
<keyword id="KW-0812">Transmembrane</keyword>
<keyword id="KW-1133">Transmembrane helix</keyword>
<keyword id="KW-1188">Viral release from host cell</keyword>
<proteinExistence type="inferred from homology"/>
<accession>P03802</accession>
<evidence type="ECO:0000255" key="1">
    <source>
        <dbReference type="HAMAP-Rule" id="MF_04108"/>
    </source>
</evidence>
<evidence type="ECO:0000303" key="2">
    <source>
    </source>
</evidence>
<evidence type="ECO:0000305" key="3">
    <source>
    </source>
</evidence>
<evidence type="ECO:0000305" key="4">
    <source>
    </source>
</evidence>
<organismHost>
    <name type="scientific">Escherichia coli</name>
    <dbReference type="NCBI Taxonomy" id="562"/>
</organismHost>
<protein>
    <recommendedName>
        <fullName evidence="1">Holin</fullName>
    </recommendedName>
    <alternativeName>
        <fullName>Gene product 17.5</fullName>
        <shortName>Gp17.5</shortName>
    </alternativeName>
</protein>
<comment type="function">
    <text evidence="1 3 4">Accumulates harmlessly in the cytoplasmic membrane until it reaches a critical concentration that triggers the formation of micron-scale pores (holes) causing host cell membrane disruption and endolysin escape into the periplasmic space. Participates in determining the precise timing of host cell lysis. Participates with the endolysin and spanin proteins in the sequential events which lead to the programmed host cell lysis releasing the mature viral particles from the host cell.</text>
</comment>
<comment type="subunit">
    <text evidence="1 3">Homomultimer.</text>
</comment>
<comment type="subcellular location">
    <subcellularLocation>
        <location evidence="1 3">Host cell inner membrane</location>
        <topology evidence="1 3">Single-pass type II membrane protein</topology>
        <orientation evidence="1 3">Periplasmic side</orientation>
    </subcellularLocation>
    <text evidence="1 2">Classified as a class II holin although it seems to have only one transmembrane domain.</text>
</comment>
<comment type="similarity">
    <text evidence="1">Belongs to the T7likevirus holin family.</text>
</comment>
<name>HOLIN_BPT7</name>
<feature type="chain" id="PRO_0000106533" description="Holin">
    <location>
        <begin position="1"/>
        <end position="67"/>
    </location>
</feature>
<feature type="topological domain" description="Cytoplasmic" evidence="1">
    <location>
        <begin position="1"/>
        <end position="36"/>
    </location>
</feature>
<feature type="transmembrane region" description="Helical; Signal-anchor for type II membrane protein" evidence="1">
    <location>
        <begin position="37"/>
        <end position="55"/>
    </location>
</feature>
<feature type="topological domain" description="Periplasmic" evidence="1">
    <location>
        <begin position="56"/>
        <end position="67"/>
    </location>
</feature>